<organism>
    <name type="scientific">Chlamydia pneumoniae</name>
    <name type="common">Chlamydophila pneumoniae</name>
    <dbReference type="NCBI Taxonomy" id="83558"/>
    <lineage>
        <taxon>Bacteria</taxon>
        <taxon>Pseudomonadati</taxon>
        <taxon>Chlamydiota</taxon>
        <taxon>Chlamydiia</taxon>
        <taxon>Chlamydiales</taxon>
        <taxon>Chlamydiaceae</taxon>
        <taxon>Chlamydia/Chlamydophila group</taxon>
        <taxon>Chlamydia</taxon>
    </lineage>
</organism>
<name>GCH1L_CHLPN</name>
<evidence type="ECO:0000250" key="1">
    <source>
        <dbReference type="UniProtKB" id="P0AFP6"/>
    </source>
</evidence>
<evidence type="ECO:0000305" key="2"/>
<reference key="1">
    <citation type="journal article" date="1999" name="Nat. Genet.">
        <title>Comparative genomes of Chlamydia pneumoniae and C. trachomatis.</title>
        <authorList>
            <person name="Kalman S."/>
            <person name="Mitchell W.P."/>
            <person name="Marathe R."/>
            <person name="Lammel C.J."/>
            <person name="Fan J."/>
            <person name="Hyman R.W."/>
            <person name="Olinger L."/>
            <person name="Grimwood J."/>
            <person name="Davis R.W."/>
            <person name="Stephens R.S."/>
        </authorList>
    </citation>
    <scope>NUCLEOTIDE SEQUENCE [LARGE SCALE GENOMIC DNA]</scope>
    <source>
        <strain>CWL029</strain>
    </source>
</reference>
<reference key="2">
    <citation type="journal article" date="2000" name="Nucleic Acids Res.">
        <title>Genome sequences of Chlamydia trachomatis MoPn and Chlamydia pneumoniae AR39.</title>
        <authorList>
            <person name="Read T.D."/>
            <person name="Brunham R.C."/>
            <person name="Shen C."/>
            <person name="Gill S.R."/>
            <person name="Heidelberg J.F."/>
            <person name="White O."/>
            <person name="Hickey E.K."/>
            <person name="Peterson J.D."/>
            <person name="Utterback T.R."/>
            <person name="Berry K.J."/>
            <person name="Bass S."/>
            <person name="Linher K.D."/>
            <person name="Weidman J.F."/>
            <person name="Khouri H.M."/>
            <person name="Craven B."/>
            <person name="Bowman C."/>
            <person name="Dodson R.J."/>
            <person name="Gwinn M.L."/>
            <person name="Nelson W.C."/>
            <person name="DeBoy R.T."/>
            <person name="Kolonay J.F."/>
            <person name="McClarty G."/>
            <person name="Salzberg S.L."/>
            <person name="Eisen J.A."/>
            <person name="Fraser C.M."/>
        </authorList>
    </citation>
    <scope>NUCLEOTIDE SEQUENCE [LARGE SCALE GENOMIC DNA]</scope>
    <source>
        <strain>AR39</strain>
    </source>
</reference>
<reference key="3">
    <citation type="journal article" date="2000" name="Nucleic Acids Res.">
        <title>Comparison of whole genome sequences of Chlamydia pneumoniae J138 from Japan and CWL029 from USA.</title>
        <authorList>
            <person name="Shirai M."/>
            <person name="Hirakawa H."/>
            <person name="Kimoto M."/>
            <person name="Tabuchi M."/>
            <person name="Kishi F."/>
            <person name="Ouchi K."/>
            <person name="Shiba T."/>
            <person name="Ishii K."/>
            <person name="Hattori M."/>
            <person name="Kuhara S."/>
            <person name="Nakazawa T."/>
        </authorList>
    </citation>
    <scope>NUCLEOTIDE SEQUENCE [LARGE SCALE GENOMIC DNA]</scope>
    <source>
        <strain>J138</strain>
    </source>
</reference>
<reference key="4">
    <citation type="submission" date="2002-05" db="EMBL/GenBank/DDBJ databases">
        <title>The genome sequence of Chlamydia pneumoniae TW183 and comparison with other Chlamydia strains based on whole genome sequence analysis.</title>
        <authorList>
            <person name="Geng M.M."/>
            <person name="Schuhmacher A."/>
            <person name="Muehldorfer I."/>
            <person name="Bensch K.W."/>
            <person name="Schaefer K.P."/>
            <person name="Schneider S."/>
            <person name="Pohl T."/>
            <person name="Essig A."/>
            <person name="Marre R."/>
            <person name="Melchers K."/>
        </authorList>
    </citation>
    <scope>NUCLEOTIDE SEQUENCE [LARGE SCALE GENOMIC DNA]</scope>
    <source>
        <strain>TW-183</strain>
    </source>
</reference>
<feature type="chain" id="PRO_0000147302" description="GTP cyclohydrolase 1 type 2 homolog">
    <location>
        <begin position="1"/>
        <end position="251"/>
    </location>
</feature>
<feature type="binding site" evidence="1">
    <location>
        <position position="64"/>
    </location>
    <ligand>
        <name>a divalent metal cation</name>
        <dbReference type="ChEBI" id="CHEBI:60240"/>
        <label>1</label>
    </ligand>
</feature>
<feature type="binding site" evidence="1">
    <location>
        <position position="65"/>
    </location>
    <ligand>
        <name>a divalent metal cation</name>
        <dbReference type="ChEBI" id="CHEBI:60240"/>
        <label>2</label>
    </ligand>
</feature>
<feature type="binding site" evidence="1">
    <location>
        <position position="102"/>
    </location>
    <ligand>
        <name>a divalent metal cation</name>
        <dbReference type="ChEBI" id="CHEBI:60240"/>
        <label>1</label>
    </ligand>
</feature>
<feature type="binding site" evidence="1">
    <location>
        <position position="219"/>
    </location>
    <ligand>
        <name>a divalent metal cation</name>
        <dbReference type="ChEBI" id="CHEBI:60240"/>
        <label>2</label>
    </ligand>
</feature>
<feature type="binding site" evidence="1">
    <location>
        <position position="223"/>
    </location>
    <ligand>
        <name>a divalent metal cation</name>
        <dbReference type="ChEBI" id="CHEBI:60240"/>
        <label>1</label>
    </ligand>
</feature>
<feature type="binding site" evidence="1">
    <location>
        <position position="223"/>
    </location>
    <ligand>
        <name>a divalent metal cation</name>
        <dbReference type="ChEBI" id="CHEBI:60240"/>
        <label>2</label>
    </ligand>
</feature>
<dbReference type="EMBL" id="AE001363">
    <property type="protein sequence ID" value="AAD18290.1"/>
    <property type="molecule type" value="Genomic_DNA"/>
</dbReference>
<dbReference type="EMBL" id="AE002161">
    <property type="protein sequence ID" value="AAF38450.1"/>
    <property type="molecule type" value="Genomic_DNA"/>
</dbReference>
<dbReference type="EMBL" id="BA000008">
    <property type="protein sequence ID" value="BAA98347.1"/>
    <property type="molecule type" value="Genomic_DNA"/>
</dbReference>
<dbReference type="EMBL" id="AE009440">
    <property type="protein sequence ID" value="AAP98071.1"/>
    <property type="molecule type" value="Genomic_DNA"/>
</dbReference>
<dbReference type="PIR" id="A86508">
    <property type="entry name" value="A86508"/>
</dbReference>
<dbReference type="PIR" id="F72114">
    <property type="entry name" value="F72114"/>
</dbReference>
<dbReference type="RefSeq" id="NP_224345.1">
    <property type="nucleotide sequence ID" value="NC_000922.1"/>
</dbReference>
<dbReference type="RefSeq" id="WP_010882787.1">
    <property type="nucleotide sequence ID" value="NZ_LN847257.1"/>
</dbReference>
<dbReference type="SMR" id="Q9Z946"/>
<dbReference type="STRING" id="406984.CPK_ORF00649"/>
<dbReference type="GeneID" id="45050182"/>
<dbReference type="KEGG" id="cpa:CP_0635"/>
<dbReference type="KEGG" id="cpj:ybgI"/>
<dbReference type="KEGG" id="cpn:CPn_0137"/>
<dbReference type="KEGG" id="cpt:CpB0138"/>
<dbReference type="PATRIC" id="fig|115713.3.peg.154"/>
<dbReference type="eggNOG" id="COG0327">
    <property type="taxonomic scope" value="Bacteria"/>
</dbReference>
<dbReference type="HOGENOM" id="CLU_037423_3_0_0"/>
<dbReference type="OrthoDB" id="9792792at2"/>
<dbReference type="Proteomes" id="UP000000583">
    <property type="component" value="Chromosome"/>
</dbReference>
<dbReference type="Proteomes" id="UP000000801">
    <property type="component" value="Chromosome"/>
</dbReference>
<dbReference type="GO" id="GO:0005737">
    <property type="term" value="C:cytoplasm"/>
    <property type="evidence" value="ECO:0007669"/>
    <property type="project" value="TreeGrafter"/>
</dbReference>
<dbReference type="GO" id="GO:0046872">
    <property type="term" value="F:metal ion binding"/>
    <property type="evidence" value="ECO:0007669"/>
    <property type="project" value="UniProtKB-KW"/>
</dbReference>
<dbReference type="FunFam" id="3.40.1390.30:FF:000001">
    <property type="entry name" value="GTP cyclohydrolase 1 type 2"/>
    <property type="match status" value="1"/>
</dbReference>
<dbReference type="Gene3D" id="3.40.1390.30">
    <property type="entry name" value="NIF3 (NGG1p interacting factor 3)-like"/>
    <property type="match status" value="2"/>
</dbReference>
<dbReference type="InterPro" id="IPR002678">
    <property type="entry name" value="DUF34/NIF3"/>
</dbReference>
<dbReference type="InterPro" id="IPR036069">
    <property type="entry name" value="DUF34/NIF3_sf"/>
</dbReference>
<dbReference type="NCBIfam" id="TIGR00486">
    <property type="entry name" value="YbgI_SA1388"/>
    <property type="match status" value="1"/>
</dbReference>
<dbReference type="PANTHER" id="PTHR13799:SF14">
    <property type="entry name" value="GTP CYCLOHYDROLASE 1 TYPE 2 HOMOLOG"/>
    <property type="match status" value="1"/>
</dbReference>
<dbReference type="PANTHER" id="PTHR13799">
    <property type="entry name" value="NGG1 INTERACTING FACTOR 3"/>
    <property type="match status" value="1"/>
</dbReference>
<dbReference type="Pfam" id="PF01784">
    <property type="entry name" value="DUF34_NIF3"/>
    <property type="match status" value="1"/>
</dbReference>
<dbReference type="SUPFAM" id="SSF102705">
    <property type="entry name" value="NIF3 (NGG1p interacting factor 3)-like"/>
    <property type="match status" value="1"/>
</dbReference>
<protein>
    <recommendedName>
        <fullName>GTP cyclohydrolase 1 type 2 homolog</fullName>
    </recommendedName>
</protein>
<proteinExistence type="inferred from homology"/>
<sequence>MNVADLLSHLETLLSSKIFQDYGPNGLQVGDPQTPVKKIAVAVTADLETIKQAVAAEANVLIVHHGIFWKGMPYPITGMIHKRIQLLIEHNIQLIAYHLPLDAHPTLGNNWRVALDLNWHDLKPFGSSLPYLGVQGSFSPIDIDSFIDLLSQYYQAPLKGSALGGPSRVSSAALISGGAYRELSSAATSQVDCFITGNFDEPAWSTALESNINFLAFGHTATEKVGPKSLAEHLKSEFPISTTFIDTANPF</sequence>
<gene>
    <name type="ordered locus">CPn_0137</name>
    <name type="ordered locus">CP_0635</name>
    <name type="ordered locus">CPj0137</name>
    <name type="ordered locus">CpB0138</name>
</gene>
<comment type="subunit">
    <text evidence="1">Homohexamer.</text>
</comment>
<comment type="similarity">
    <text evidence="2">Belongs to the GTP cyclohydrolase I type 2/NIF3 family.</text>
</comment>
<keyword id="KW-0479">Metal-binding</keyword>
<accession>Q9Z946</accession>